<organism>
    <name type="scientific">Pseudomonas putida (strain ATCC 700007 / DSM 6899 / JCM 31910 / BCRC 17059 / LMG 24140 / F1)</name>
    <dbReference type="NCBI Taxonomy" id="351746"/>
    <lineage>
        <taxon>Bacteria</taxon>
        <taxon>Pseudomonadati</taxon>
        <taxon>Pseudomonadota</taxon>
        <taxon>Gammaproteobacteria</taxon>
        <taxon>Pseudomonadales</taxon>
        <taxon>Pseudomonadaceae</taxon>
        <taxon>Pseudomonas</taxon>
    </lineage>
</organism>
<accession>A5W4G5</accession>
<accession>Q51977</accession>
<comment type="catalytic activity">
    <reaction>
        <text>(2R,3S)-2,3-dihydroxy-2,3-dihydro-p-cumate + NAD(+) = 2,3-dihydroxy-p-cumate + NADH + H(+)</text>
        <dbReference type="Rhea" id="RHEA:23772"/>
        <dbReference type="ChEBI" id="CHEBI:15378"/>
        <dbReference type="ChEBI" id="CHEBI:36647"/>
        <dbReference type="ChEBI" id="CHEBI:57540"/>
        <dbReference type="ChEBI" id="CHEBI:57945"/>
        <dbReference type="ChEBI" id="CHEBI:58420"/>
        <dbReference type="EC" id="1.3.1.58"/>
    </reaction>
</comment>
<comment type="pathway">
    <text>Aromatic compound metabolism; p-cumate degradation; acetaldehyde and pyruvate from p-cumate: step 2/7.</text>
</comment>
<comment type="similarity">
    <text evidence="3">Belongs to the short-chain dehydrogenases/reductases (SDR) family.</text>
</comment>
<sequence>MSTLSRNALPLEGQVAVVTGGAHGIGLGIVERLLGLGARVTASDIDESGLSLLCERLAAKHADAIAVHAADLSEEQGAQGLHRAAVERFGSVQILVNCAGGGVIRPFLEHTPETLKATIDRNLWTALWCSRVFLPDMLARQYGRIINIGADSVRNGLPDHAAYNAAKGGMHGLTTGLAREFARQGVTVNTVAPCAVNTEVWVRIKNANPELAQRFLDVIPMGRVGEIEEVASMVGYLAQPEAAFVTGQVISVNGGSTML</sequence>
<feature type="chain" id="PRO_0000314469" description="2,3-dihydroxy-2,3-dihydro-p-cumate dehydrogenase">
    <location>
        <begin position="1"/>
        <end position="259"/>
    </location>
</feature>
<feature type="active site" description="Proton acceptor" evidence="2">
    <location>
        <position position="163"/>
    </location>
</feature>
<feature type="binding site" evidence="1">
    <location>
        <begin position="18"/>
        <end position="42"/>
    </location>
    <ligand>
        <name>NAD(+)</name>
        <dbReference type="ChEBI" id="CHEBI:57540"/>
    </ligand>
</feature>
<keyword id="KW-0058">Aromatic hydrocarbons catabolism</keyword>
<keyword id="KW-0520">NAD</keyword>
<keyword id="KW-0560">Oxidoreductase</keyword>
<reference key="1">
    <citation type="journal article" date="1996" name="J. Bacteriol.">
        <title>p-cumate catabolic pathway in Pseudomonas putida F1: cloning and characterization of DNA carrying the cmt operon.</title>
        <authorList>
            <person name="Eaton R.W."/>
        </authorList>
    </citation>
    <scope>NUCLEOTIDE SEQUENCE [GENOMIC DNA]</scope>
</reference>
<reference key="2">
    <citation type="submission" date="2007-05" db="EMBL/GenBank/DDBJ databases">
        <title>Complete sequence of Pseudomonas putida F1.</title>
        <authorList>
            <consortium name="US DOE Joint Genome Institute"/>
            <person name="Copeland A."/>
            <person name="Lucas S."/>
            <person name="Lapidus A."/>
            <person name="Barry K."/>
            <person name="Detter J.C."/>
            <person name="Glavina del Rio T."/>
            <person name="Hammon N."/>
            <person name="Israni S."/>
            <person name="Dalin E."/>
            <person name="Tice H."/>
            <person name="Pitluck S."/>
            <person name="Chain P."/>
            <person name="Malfatti S."/>
            <person name="Shin M."/>
            <person name="Vergez L."/>
            <person name="Schmutz J."/>
            <person name="Larimer F."/>
            <person name="Land M."/>
            <person name="Hauser L."/>
            <person name="Kyrpides N."/>
            <person name="Lykidis A."/>
            <person name="Parales R."/>
            <person name="Richardson P."/>
        </authorList>
    </citation>
    <scope>NUCLEOTIDE SEQUENCE [LARGE SCALE GENOMIC DNA]</scope>
    <source>
        <strain>ATCC 700007 / DSM 6899 / JCM 31910 / BCRC 17059 / LMG 24140 / F1</strain>
    </source>
</reference>
<evidence type="ECO:0000250" key="1"/>
<evidence type="ECO:0000255" key="2">
    <source>
        <dbReference type="PROSITE-ProRule" id="PRU10001"/>
    </source>
</evidence>
<evidence type="ECO:0000305" key="3"/>
<proteinExistence type="inferred from homology"/>
<dbReference type="EC" id="1.3.1.58"/>
<dbReference type="EMBL" id="U24215">
    <property type="protein sequence ID" value="AAB62288.1"/>
    <property type="molecule type" value="Genomic_DNA"/>
</dbReference>
<dbReference type="EMBL" id="CP000712">
    <property type="protein sequence ID" value="ABQ79025.1"/>
    <property type="molecule type" value="Genomic_DNA"/>
</dbReference>
<dbReference type="SMR" id="A5W4G5"/>
<dbReference type="KEGG" id="ppf:Pput_2895"/>
<dbReference type="eggNOG" id="COG1028">
    <property type="taxonomic scope" value="Bacteria"/>
</dbReference>
<dbReference type="HOGENOM" id="CLU_010194_1_3_6"/>
<dbReference type="BioCyc" id="MetaCyc:MONOMER-348"/>
<dbReference type="UniPathway" id="UPA00937">
    <property type="reaction ID" value="UER00902"/>
</dbReference>
<dbReference type="GO" id="GO:0018511">
    <property type="term" value="F:2,3-dihydroxy-2,3-dihydro-p-cumate dehydrogenase activity"/>
    <property type="evidence" value="ECO:0007669"/>
    <property type="project" value="UniProtKB-EC"/>
</dbReference>
<dbReference type="GO" id="GO:0009056">
    <property type="term" value="P:catabolic process"/>
    <property type="evidence" value="ECO:0007669"/>
    <property type="project" value="UniProtKB-KW"/>
</dbReference>
<dbReference type="CDD" id="cd08937">
    <property type="entry name" value="DHB_DH-like_SDR_c"/>
    <property type="match status" value="1"/>
</dbReference>
<dbReference type="FunFam" id="3.40.50.720:FF:000173">
    <property type="entry name" value="3-oxoacyl-[acyl-carrier protein] reductase"/>
    <property type="match status" value="1"/>
</dbReference>
<dbReference type="Gene3D" id="3.40.50.720">
    <property type="entry name" value="NAD(P)-binding Rossmann-like Domain"/>
    <property type="match status" value="1"/>
</dbReference>
<dbReference type="InterPro" id="IPR036291">
    <property type="entry name" value="NAD(P)-bd_dom_sf"/>
</dbReference>
<dbReference type="InterPro" id="IPR020904">
    <property type="entry name" value="Sc_DH/Rdtase_CS"/>
</dbReference>
<dbReference type="InterPro" id="IPR002347">
    <property type="entry name" value="SDR_fam"/>
</dbReference>
<dbReference type="PANTHER" id="PTHR43639">
    <property type="entry name" value="OXIDOREDUCTASE, SHORT-CHAIN DEHYDROGENASE/REDUCTASE FAMILY (AFU_ORTHOLOGUE AFUA_5G02870)"/>
    <property type="match status" value="1"/>
</dbReference>
<dbReference type="PANTHER" id="PTHR43639:SF1">
    <property type="entry name" value="SHORT-CHAIN DEHYDROGENASE_REDUCTASE FAMILY PROTEIN"/>
    <property type="match status" value="1"/>
</dbReference>
<dbReference type="Pfam" id="PF13561">
    <property type="entry name" value="adh_short_C2"/>
    <property type="match status" value="1"/>
</dbReference>
<dbReference type="PRINTS" id="PR00081">
    <property type="entry name" value="GDHRDH"/>
</dbReference>
<dbReference type="PRINTS" id="PR00080">
    <property type="entry name" value="SDRFAMILY"/>
</dbReference>
<dbReference type="SUPFAM" id="SSF51735">
    <property type="entry name" value="NAD(P)-binding Rossmann-fold domains"/>
    <property type="match status" value="1"/>
</dbReference>
<dbReference type="PROSITE" id="PS00061">
    <property type="entry name" value="ADH_SHORT"/>
    <property type="match status" value="1"/>
</dbReference>
<name>CMTB_PSEP1</name>
<protein>
    <recommendedName>
        <fullName>2,3-dihydroxy-2,3-dihydro-p-cumate dehydrogenase</fullName>
        <ecNumber>1.3.1.58</ecNumber>
    </recommendedName>
    <alternativeName>
        <fullName>Biphenyl-2,3-dihydro-2,3-diol dehydrogenase</fullName>
    </alternativeName>
</protein>
<gene>
    <name type="primary">cmtB</name>
    <name type="ordered locus">Pput_2895</name>
</gene>